<dbReference type="EC" id="3.1.4.14" evidence="1"/>
<dbReference type="EMBL" id="M37702">
    <property type="protein sequence ID" value="AAA16113.1"/>
    <property type="status" value="ALT_FRAME"/>
    <property type="molecule type" value="Genomic_DNA"/>
</dbReference>
<dbReference type="EMBL" id="U82664">
    <property type="protein sequence ID" value="AAB40160.1"/>
    <property type="molecule type" value="Genomic_DNA"/>
</dbReference>
<dbReference type="EMBL" id="U00096">
    <property type="protein sequence ID" value="AAC73507.1"/>
    <property type="molecule type" value="Genomic_DNA"/>
</dbReference>
<dbReference type="EMBL" id="AP009048">
    <property type="protein sequence ID" value="BAE76184.1"/>
    <property type="molecule type" value="Genomic_DNA"/>
</dbReference>
<dbReference type="PIR" id="D64769">
    <property type="entry name" value="D64769"/>
</dbReference>
<dbReference type="RefSeq" id="NP_414938.1">
    <property type="nucleotide sequence ID" value="NC_000913.3"/>
</dbReference>
<dbReference type="RefSeq" id="WP_001009885.1">
    <property type="nucleotide sequence ID" value="NZ_SSZK01000009.1"/>
</dbReference>
<dbReference type="SMR" id="P21515"/>
<dbReference type="BioGRID" id="4261717">
    <property type="interactions" value="15"/>
</dbReference>
<dbReference type="FunCoup" id="P21515">
    <property type="interactions" value="57"/>
</dbReference>
<dbReference type="IntAct" id="P21515">
    <property type="interactions" value="2"/>
</dbReference>
<dbReference type="STRING" id="511145.b0404"/>
<dbReference type="jPOST" id="P21515"/>
<dbReference type="PaxDb" id="511145-b0404"/>
<dbReference type="EnsemblBacteria" id="AAC73507">
    <property type="protein sequence ID" value="AAC73507"/>
    <property type="gene ID" value="b0404"/>
</dbReference>
<dbReference type="GeneID" id="949132"/>
<dbReference type="KEGG" id="ecj:JW0394"/>
<dbReference type="KEGG" id="eco:b0404"/>
<dbReference type="KEGG" id="ecoc:C3026_01965"/>
<dbReference type="PATRIC" id="fig|511145.12.peg.420"/>
<dbReference type="EchoBASE" id="EB1087"/>
<dbReference type="eggNOG" id="COG3124">
    <property type="taxonomic scope" value="Bacteria"/>
</dbReference>
<dbReference type="HOGENOM" id="CLU_099370_1_0_6"/>
<dbReference type="InParanoid" id="P21515"/>
<dbReference type="OMA" id="MNFLAHI"/>
<dbReference type="OrthoDB" id="8442777at2"/>
<dbReference type="PhylomeDB" id="P21515"/>
<dbReference type="BioCyc" id="EcoCyc:EG11095-MONOMER"/>
<dbReference type="BioCyc" id="MetaCyc:EG11095-MONOMER"/>
<dbReference type="BRENDA" id="3.1.4.14">
    <property type="organism ID" value="2026"/>
</dbReference>
<dbReference type="PRO" id="PR:P21515"/>
<dbReference type="Proteomes" id="UP000000625">
    <property type="component" value="Chromosome"/>
</dbReference>
<dbReference type="GO" id="GO:0008770">
    <property type="term" value="F:[acyl-carrier-protein] phosphodiesterase activity"/>
    <property type="evidence" value="ECO:0000314"/>
    <property type="project" value="EcoCyc"/>
</dbReference>
<dbReference type="GO" id="GO:0006633">
    <property type="term" value="P:fatty acid biosynthetic process"/>
    <property type="evidence" value="ECO:0000314"/>
    <property type="project" value="EcoCyc"/>
</dbReference>
<dbReference type="HAMAP" id="MF_01950">
    <property type="entry name" value="AcpH"/>
    <property type="match status" value="1"/>
</dbReference>
<dbReference type="InterPro" id="IPR007431">
    <property type="entry name" value="ACP_PD"/>
</dbReference>
<dbReference type="InterPro" id="IPR023491">
    <property type="entry name" value="ACP_phosphodiesterase_gpbac"/>
</dbReference>
<dbReference type="NCBIfam" id="NF007466">
    <property type="entry name" value="PRK10045.1"/>
    <property type="match status" value="1"/>
</dbReference>
<dbReference type="PANTHER" id="PTHR38764">
    <property type="entry name" value="ACYL CARRIER PROTEIN PHOSPHODIESTERASE"/>
    <property type="match status" value="1"/>
</dbReference>
<dbReference type="PANTHER" id="PTHR38764:SF1">
    <property type="entry name" value="ACYL CARRIER PROTEIN PHOSPHODIESTERASE"/>
    <property type="match status" value="1"/>
</dbReference>
<dbReference type="Pfam" id="PF04336">
    <property type="entry name" value="ACP_PD"/>
    <property type="match status" value="1"/>
</dbReference>
<dbReference type="PIRSF" id="PIRSF011489">
    <property type="entry name" value="DUF479"/>
    <property type="match status" value="1"/>
</dbReference>
<protein>
    <recommendedName>
        <fullName evidence="1">Acyl carrier protein phosphodiesterase</fullName>
        <shortName evidence="1">ACP phosphodiesterase</shortName>
        <ecNumber evidence="1">3.1.4.14</ecNumber>
    </recommendedName>
</protein>
<gene>
    <name evidence="1" type="primary">acpH</name>
    <name type="synonym">yajB</name>
    <name type="ordered locus">b0404</name>
    <name type="ordered locus">JW0394</name>
</gene>
<proteinExistence type="evidence at protein level"/>
<evidence type="ECO:0000255" key="1">
    <source>
        <dbReference type="HAMAP-Rule" id="MF_01950"/>
    </source>
</evidence>
<evidence type="ECO:0000269" key="2">
    <source>
    </source>
</evidence>
<evidence type="ECO:0000305" key="3"/>
<feature type="chain" id="PRO_0000168605" description="Acyl carrier protein phosphodiesterase">
    <location>
        <begin position="1"/>
        <end position="193"/>
    </location>
</feature>
<comment type="function">
    <text evidence="1 2">Converts holo-ACP to apo-ACP by hydrolytic cleavage of the phosphopantetheine prosthetic group from ACP.</text>
</comment>
<comment type="catalytic activity">
    <reaction evidence="1 2">
        <text>holo-[ACP] + H2O = apo-[ACP] + (R)-4'-phosphopantetheine + H(+)</text>
        <dbReference type="Rhea" id="RHEA:20537"/>
        <dbReference type="Rhea" id="RHEA-COMP:9685"/>
        <dbReference type="Rhea" id="RHEA-COMP:9690"/>
        <dbReference type="ChEBI" id="CHEBI:15377"/>
        <dbReference type="ChEBI" id="CHEBI:15378"/>
        <dbReference type="ChEBI" id="CHEBI:29999"/>
        <dbReference type="ChEBI" id="CHEBI:61723"/>
        <dbReference type="ChEBI" id="CHEBI:64479"/>
        <dbReference type="EC" id="3.1.4.14"/>
    </reaction>
</comment>
<comment type="similarity">
    <text evidence="1">Belongs to the AcpH family.</text>
</comment>
<comment type="sequence caution" evidence="3">
    <conflict type="frameshift">
        <sequence resource="EMBL-CDS" id="AAA16113"/>
    </conflict>
</comment>
<sequence>MNFLAHLHLAHLAESSLSGNLLADFVRGNPEESFPPDVVAGIHMHRRIDVLTDNLPEVREAREWFRSETRRVAPITLDVMWDHFLSRHWSQLSPDFPLQEFVCYAREQVMTILPDSPPRFINLNNYLWSEQWLVRYRDMDFIQNVLNGMASRRPRLDALRDSWYDLDAHYDALETRFWQFYPRMMAQASRKAL</sequence>
<reference key="1">
    <citation type="journal article" date="1991" name="J. Bacteriol.">
        <title>Structure and organization of Escherichia coli genes involved in biosynthesis of the deazaguanine derivative queuine, a nutrient factor for eukaryotes.</title>
        <authorList>
            <person name="Reuter K."/>
            <person name="Slany R."/>
            <person name="Ullrich F."/>
            <person name="Kersten H."/>
        </authorList>
    </citation>
    <scope>NUCLEOTIDE SEQUENCE [GENOMIC DNA]</scope>
    <source>
        <strain>K12</strain>
    </source>
</reference>
<reference key="2">
    <citation type="submission" date="1997-01" db="EMBL/GenBank/DDBJ databases">
        <title>Sequence of minutes 4-25 of Escherichia coli.</title>
        <authorList>
            <person name="Chung E."/>
            <person name="Allen E."/>
            <person name="Araujo R."/>
            <person name="Aparicio A.M."/>
            <person name="Davis K."/>
            <person name="Duncan M."/>
            <person name="Federspiel N."/>
            <person name="Hyman R."/>
            <person name="Kalman S."/>
            <person name="Komp C."/>
            <person name="Kurdi O."/>
            <person name="Lew H."/>
            <person name="Lin D."/>
            <person name="Namath A."/>
            <person name="Oefner P."/>
            <person name="Roberts D."/>
            <person name="Schramm S."/>
            <person name="Davis R.W."/>
        </authorList>
    </citation>
    <scope>NUCLEOTIDE SEQUENCE [LARGE SCALE GENOMIC DNA]</scope>
    <source>
        <strain>K12 / MG1655 / ATCC 47076</strain>
    </source>
</reference>
<reference key="3">
    <citation type="journal article" date="1997" name="Science">
        <title>The complete genome sequence of Escherichia coli K-12.</title>
        <authorList>
            <person name="Blattner F.R."/>
            <person name="Plunkett G. III"/>
            <person name="Bloch C.A."/>
            <person name="Perna N.T."/>
            <person name="Burland V."/>
            <person name="Riley M."/>
            <person name="Collado-Vides J."/>
            <person name="Glasner J.D."/>
            <person name="Rode C.K."/>
            <person name="Mayhew G.F."/>
            <person name="Gregor J."/>
            <person name="Davis N.W."/>
            <person name="Kirkpatrick H.A."/>
            <person name="Goeden M.A."/>
            <person name="Rose D.J."/>
            <person name="Mau B."/>
            <person name="Shao Y."/>
        </authorList>
    </citation>
    <scope>NUCLEOTIDE SEQUENCE [LARGE SCALE GENOMIC DNA]</scope>
    <source>
        <strain>K12 / MG1655 / ATCC 47076</strain>
    </source>
</reference>
<reference key="4">
    <citation type="journal article" date="2006" name="Mol. Syst. Biol.">
        <title>Highly accurate genome sequences of Escherichia coli K-12 strains MG1655 and W3110.</title>
        <authorList>
            <person name="Hayashi K."/>
            <person name="Morooka N."/>
            <person name="Yamamoto Y."/>
            <person name="Fujita K."/>
            <person name="Isono K."/>
            <person name="Choi S."/>
            <person name="Ohtsubo E."/>
            <person name="Baba T."/>
            <person name="Wanner B.L."/>
            <person name="Mori H."/>
            <person name="Horiuchi T."/>
        </authorList>
    </citation>
    <scope>NUCLEOTIDE SEQUENCE [LARGE SCALE GENOMIC DNA]</scope>
    <source>
        <strain>K12 / W3110 / ATCC 27325 / DSM 5911</strain>
    </source>
</reference>
<reference key="5">
    <citation type="journal article" date="2005" name="J. Biol. Chem.">
        <title>The enigmatic acyl carrier protein phosphodiesterase of Escherichia coli: genetic and enzymological characterization.</title>
        <authorList>
            <person name="Thomas J."/>
            <person name="Cronan J.E."/>
        </authorList>
    </citation>
    <scope>FUNCTION</scope>
    <scope>CATALYTIC ACTIVITY</scope>
    <source>
        <strain>K12 / MG1655 / ATCC 47076</strain>
    </source>
</reference>
<organism>
    <name type="scientific">Escherichia coli (strain K12)</name>
    <dbReference type="NCBI Taxonomy" id="83333"/>
    <lineage>
        <taxon>Bacteria</taxon>
        <taxon>Pseudomonadati</taxon>
        <taxon>Pseudomonadota</taxon>
        <taxon>Gammaproteobacteria</taxon>
        <taxon>Enterobacterales</taxon>
        <taxon>Enterobacteriaceae</taxon>
        <taxon>Escherichia</taxon>
    </lineage>
</organism>
<name>ACPH_ECOLI</name>
<accession>P21515</accession>
<accession>P46123</accession>
<accession>P77369</accession>
<accession>Q2MC22</accession>
<keyword id="KW-0275">Fatty acid biosynthesis</keyword>
<keyword id="KW-0276">Fatty acid metabolism</keyword>
<keyword id="KW-0378">Hydrolase</keyword>
<keyword id="KW-0444">Lipid biosynthesis</keyword>
<keyword id="KW-0443">Lipid metabolism</keyword>
<keyword id="KW-1185">Reference proteome</keyword>